<feature type="chain" id="PRO_0000118120" description="NADH-ubiquinone oxidoreductase chain 5">
    <location>
        <begin position="1"/>
        <end position="612"/>
    </location>
</feature>
<feature type="transmembrane region" description="Helical" evidence="2">
    <location>
        <begin position="4"/>
        <end position="24"/>
    </location>
</feature>
<feature type="transmembrane region" description="Helical" evidence="2">
    <location>
        <begin position="48"/>
        <end position="68"/>
    </location>
</feature>
<feature type="transmembrane region" description="Helical" evidence="2">
    <location>
        <begin position="92"/>
        <end position="112"/>
    </location>
</feature>
<feature type="transmembrane region" description="Helical" evidence="2">
    <location>
        <begin position="127"/>
        <end position="147"/>
    </location>
</feature>
<feature type="transmembrane region" description="Helical" evidence="2">
    <location>
        <begin position="176"/>
        <end position="196"/>
    </location>
</feature>
<feature type="transmembrane region" description="Helical" evidence="2">
    <location>
        <begin position="215"/>
        <end position="235"/>
    </location>
</feature>
<feature type="transmembrane region" description="Helical" evidence="2">
    <location>
        <begin position="247"/>
        <end position="267"/>
    </location>
</feature>
<feature type="transmembrane region" description="Helical" evidence="2">
    <location>
        <begin position="279"/>
        <end position="299"/>
    </location>
</feature>
<feature type="transmembrane region" description="Helical" evidence="2">
    <location>
        <begin position="307"/>
        <end position="327"/>
    </location>
</feature>
<feature type="transmembrane region" description="Helical" evidence="2">
    <location>
        <begin position="330"/>
        <end position="350"/>
    </location>
</feature>
<feature type="transmembrane region" description="Helical" evidence="2">
    <location>
        <begin position="376"/>
        <end position="396"/>
    </location>
</feature>
<feature type="transmembrane region" description="Helical" evidence="2">
    <location>
        <begin position="410"/>
        <end position="430"/>
    </location>
</feature>
<feature type="transmembrane region" description="Helical" evidence="2">
    <location>
        <begin position="463"/>
        <end position="483"/>
    </location>
</feature>
<feature type="transmembrane region" description="Helical" evidence="2">
    <location>
        <begin position="494"/>
        <end position="514"/>
    </location>
</feature>
<feature type="transmembrane region" description="Helical" evidence="2">
    <location>
        <begin position="591"/>
        <end position="611"/>
    </location>
</feature>
<keyword id="KW-0249">Electron transport</keyword>
<keyword id="KW-0472">Membrane</keyword>
<keyword id="KW-0496">Mitochondrion</keyword>
<keyword id="KW-0999">Mitochondrion inner membrane</keyword>
<keyword id="KW-0520">NAD</keyword>
<keyword id="KW-0679">Respiratory chain</keyword>
<keyword id="KW-1278">Translocase</keyword>
<keyword id="KW-0812">Transmembrane</keyword>
<keyword id="KW-1133">Transmembrane helix</keyword>
<keyword id="KW-0813">Transport</keyword>
<keyword id="KW-0830">Ubiquinone</keyword>
<name>NU5M_ONCMY</name>
<dbReference type="EC" id="7.1.1.2"/>
<dbReference type="EMBL" id="L29771">
    <property type="protein sequence ID" value="AAB03357.1"/>
    <property type="molecule type" value="Genomic_DNA"/>
</dbReference>
<dbReference type="PIR" id="T09867">
    <property type="entry name" value="T09867"/>
</dbReference>
<dbReference type="RefSeq" id="NP_008300.1">
    <property type="nucleotide sequence ID" value="NC_001717.1"/>
</dbReference>
<dbReference type="SMR" id="P48176"/>
<dbReference type="GeneID" id="807977"/>
<dbReference type="KEGG" id="omy:807977"/>
<dbReference type="CTD" id="4540"/>
<dbReference type="OrthoDB" id="10069788at2759"/>
<dbReference type="Proteomes" id="UP000694395">
    <property type="component" value="Unplaced"/>
</dbReference>
<dbReference type="GO" id="GO:0005743">
    <property type="term" value="C:mitochondrial inner membrane"/>
    <property type="evidence" value="ECO:0007669"/>
    <property type="project" value="UniProtKB-SubCell"/>
</dbReference>
<dbReference type="GO" id="GO:0008137">
    <property type="term" value="F:NADH dehydrogenase (ubiquinone) activity"/>
    <property type="evidence" value="ECO:0007669"/>
    <property type="project" value="UniProtKB-EC"/>
</dbReference>
<dbReference type="GO" id="GO:0042773">
    <property type="term" value="P:ATP synthesis coupled electron transport"/>
    <property type="evidence" value="ECO:0007669"/>
    <property type="project" value="InterPro"/>
</dbReference>
<dbReference type="GO" id="GO:0015990">
    <property type="term" value="P:electron transport coupled proton transport"/>
    <property type="evidence" value="ECO:0007669"/>
    <property type="project" value="TreeGrafter"/>
</dbReference>
<dbReference type="InterPro" id="IPR010934">
    <property type="entry name" value="NADH_DH_su5_C"/>
</dbReference>
<dbReference type="InterPro" id="IPR018393">
    <property type="entry name" value="NADHpl_OxRdtase_5_subgr"/>
</dbReference>
<dbReference type="InterPro" id="IPR001750">
    <property type="entry name" value="ND/Mrp_TM"/>
</dbReference>
<dbReference type="InterPro" id="IPR003945">
    <property type="entry name" value="NU5C-like"/>
</dbReference>
<dbReference type="InterPro" id="IPR001516">
    <property type="entry name" value="Proton_antipo_N"/>
</dbReference>
<dbReference type="NCBIfam" id="TIGR01974">
    <property type="entry name" value="NDH_I_L"/>
    <property type="match status" value="1"/>
</dbReference>
<dbReference type="PANTHER" id="PTHR42829">
    <property type="entry name" value="NADH-UBIQUINONE OXIDOREDUCTASE CHAIN 5"/>
    <property type="match status" value="1"/>
</dbReference>
<dbReference type="PANTHER" id="PTHR42829:SF2">
    <property type="entry name" value="NADH-UBIQUINONE OXIDOREDUCTASE CHAIN 5"/>
    <property type="match status" value="1"/>
</dbReference>
<dbReference type="Pfam" id="PF06455">
    <property type="entry name" value="NADH5_C"/>
    <property type="match status" value="1"/>
</dbReference>
<dbReference type="Pfam" id="PF00361">
    <property type="entry name" value="Proton_antipo_M"/>
    <property type="match status" value="1"/>
</dbReference>
<dbReference type="Pfam" id="PF00662">
    <property type="entry name" value="Proton_antipo_N"/>
    <property type="match status" value="1"/>
</dbReference>
<dbReference type="PRINTS" id="PR01434">
    <property type="entry name" value="NADHDHGNASE5"/>
</dbReference>
<organism>
    <name type="scientific">Oncorhynchus mykiss</name>
    <name type="common">Rainbow trout</name>
    <name type="synonym">Salmo gairdneri</name>
    <dbReference type="NCBI Taxonomy" id="8022"/>
    <lineage>
        <taxon>Eukaryota</taxon>
        <taxon>Metazoa</taxon>
        <taxon>Chordata</taxon>
        <taxon>Craniata</taxon>
        <taxon>Vertebrata</taxon>
        <taxon>Euteleostomi</taxon>
        <taxon>Actinopterygii</taxon>
        <taxon>Neopterygii</taxon>
        <taxon>Teleostei</taxon>
        <taxon>Protacanthopterygii</taxon>
        <taxon>Salmoniformes</taxon>
        <taxon>Salmonidae</taxon>
        <taxon>Salmoninae</taxon>
        <taxon>Oncorhynchus</taxon>
    </lineage>
</organism>
<sequence>MHPTTLILSSSLLMIFTLLIYPLITTLTPTPQHKNWALTHVKTAIKMAFLVSLLPLFVFLDQGTETIVTNWQWMNTTTFDINLSFKFDHYSIIFTPIALYVTWSILEFASWYMHADPNMNRFFKYLLLFLIAMIILVTANNMFQLFIGWEGVGIMSFLLIGWWHGRADANTAAMQAVIYNRVGDIGLILSMAWFATNLNSWEIQQMFASSKGLDLTLPLMGLILAATGKSAQFGLHPWLPSAMEGPTPVSALLHSSTMVVAGIFLLIRLHPLMEDNQTALTVCLCLGALTTLFTATCALTQNDIKKIVAFSTSSQLGLMMVTIGLNQPQLAFLHICTHAFFKAMLFLCSGSIIHSLNDEQDIRKMGGMHNLTPSTSSCLTIGSLALTGTPFLAGFFSKDAIIEALNTSHLNAWALTLTLLATSFTAIYSLRVIFFVSMGHPRFTATAPVNENNPSVINPIKRLAWGSIIAGLLITSNFLPTNTPVMTMPTHLKLAALLVTISGLLIALELASLTNKQFKLHPTLTLHNFSNMLGFFPAIIHRLTPKLNLTLGQTIASQMVDHTWFEKVGPKELFQLTCLMVTTTSNIQQGMIKTYLTLFFLSTTLAVLLTLT</sequence>
<comment type="function">
    <text evidence="1">Core subunit of the mitochondrial membrane respiratory chain NADH dehydrogenase (Complex I) that is believed to belong to the minimal assembly required for catalysis. Complex I functions in the transfer of electrons from NADH to the respiratory chain. The immediate electron acceptor for the enzyme is believed to be ubiquinone (By similarity).</text>
</comment>
<comment type="catalytic activity">
    <reaction>
        <text>a ubiquinone + NADH + 5 H(+)(in) = a ubiquinol + NAD(+) + 4 H(+)(out)</text>
        <dbReference type="Rhea" id="RHEA:29091"/>
        <dbReference type="Rhea" id="RHEA-COMP:9565"/>
        <dbReference type="Rhea" id="RHEA-COMP:9566"/>
        <dbReference type="ChEBI" id="CHEBI:15378"/>
        <dbReference type="ChEBI" id="CHEBI:16389"/>
        <dbReference type="ChEBI" id="CHEBI:17976"/>
        <dbReference type="ChEBI" id="CHEBI:57540"/>
        <dbReference type="ChEBI" id="CHEBI:57945"/>
        <dbReference type="EC" id="7.1.1.2"/>
    </reaction>
</comment>
<comment type="subcellular location">
    <subcellularLocation>
        <location evidence="1">Mitochondrion inner membrane</location>
        <topology evidence="1">Multi-pass membrane protein</topology>
    </subcellularLocation>
</comment>
<comment type="similarity">
    <text evidence="3">Belongs to the complex I subunit 5 family.</text>
</comment>
<protein>
    <recommendedName>
        <fullName>NADH-ubiquinone oxidoreductase chain 5</fullName>
        <ecNumber>7.1.1.2</ecNumber>
    </recommendedName>
    <alternativeName>
        <fullName>NADH dehydrogenase subunit 5</fullName>
    </alternativeName>
</protein>
<accession>P48176</accession>
<geneLocation type="mitochondrion"/>
<reference key="1">
    <citation type="journal article" date="1995" name="J. Mol. Evol.">
        <title>The complete nucleotide sequence of the mitochondrial DNA genome of the rainbow trout, Oncorhynchus mykiss.</title>
        <authorList>
            <person name="Zardoya R."/>
            <person name="Garrido-Pertierra A."/>
            <person name="Bautista J.M."/>
        </authorList>
    </citation>
    <scope>NUCLEOTIDE SEQUENCE [GENOMIC DNA]</scope>
    <source>
        <tissue>Liver</tissue>
    </source>
</reference>
<proteinExistence type="inferred from homology"/>
<evidence type="ECO:0000250" key="1"/>
<evidence type="ECO:0000255" key="2"/>
<evidence type="ECO:0000305" key="3"/>
<gene>
    <name type="primary">MT-ND5</name>
    <name type="synonym">MTND5</name>
    <name type="synonym">NADH5</name>
    <name type="synonym">ND5</name>
</gene>